<protein>
    <recommendedName>
        <fullName>Structure-specific endonuclease subunit SLX4</fullName>
    </recommendedName>
    <alternativeName>
        <fullName>Mutagen-sensitive protein 312</fullName>
    </alternativeName>
</protein>
<accession>Q9VS48</accession>
<comment type="function">
    <text evidence="1 4 5 6">Regulatory subunit that interacts with and increases the activity of different structure-specific endonucleases. Has several distinct roles in protecting genome stability by resolving diverse forms of deleterious DNA structures originating from replication and recombination intermediates and from DNA damage (By similarity). Component of the SLX1-SLX4 structure-specific endonuclease that resolves DNA secondary structures generated during DNA repair and recombination. Has endonuclease activity towards branched DNA substrates, introducing single-strand cuts in duplex DNA close to junctions with ss-DNA (By similarity). Interacts with the structure-specific MEI-9-ERCC1 endonuclease to generate meiotic crossovers.</text>
</comment>
<comment type="subunit">
    <text evidence="4 5 6">Forms a heterodimer with SLX1. Interacts with mei-9; catalytic subunit of the MEI-9-ERCC1 endonuclease.</text>
</comment>
<comment type="subcellular location">
    <subcellularLocation>
        <location evidence="1">Nucleus</location>
    </subcellularLocation>
</comment>
<comment type="similarity">
    <text evidence="7">Belongs to the SLX4 family.</text>
</comment>
<gene>
    <name type="primary">mus312</name>
    <name type="synonym">SLX4</name>
    <name type="ORF">CG8601</name>
</gene>
<proteinExistence type="evidence at protein level"/>
<sequence length="1145" mass="128216">MDRKTRRANFKNLQPRLTRSTKAAADTLSLSNFFATPENAEEVPSCLADIPVQPDPPAPKIKPIRTSNVFEKPGPKPKKAPKLKASTVSTSSGARRGRGKSKQQPSISNFLRNEQIFAEVTAQHCMADNFSADDIEMALALSKSESEKHGRLRLHDDDDAVVDLLDDEEKSTERIRHKLQKYGFRTAAKEDYKSLAVLPVVASKGGRRGKWANRFTSLTLRNPDVQQKKLEEKVSALLGQEMRGKEPNGEDCCLTPYTVITAALKELRAEGESRILREPSEGPIDDLESYYVTDLFEVSRTPAHHLLKNWAAIQGRDFSPERETQKCRQLRQQHELVYAELERYYGDPQKLEEEVMQELDELEKLVADNMIEDDSVVINIVEAESSSTGSSPSKEPPDKRPKMTMEDKENLQPTTSKASLTVPAQSTRCTSPDLFADSEDEPDIVTTAISNEPEDVRNLSMKVYKNVSISERSSSVAEIEIVSSNDEPSQITTYEVFSSDEVKTVSNATQEKISFDDDFIDLTQEFDMVEFNESKPRTPNLIASSETDSNVDNLNGDTILDFSSQEVSCPISKELYAKYAKVETFPVWNAAAEEEDKIEFSLSMERDLKSSEQSSHQLGILTTPNDTEHSSSFSELNFSRNSLRRSVSLSTDLSFKSPLNWKMNSSAEKRVSPAASPYKQSDASVDLTQNSDDENDAILLSDEEINYSIWKGNKTVKDLDIGDDSSDSCFASPVTKKRAIPQFQTEEDLDAFLMDFSTDGNGSQGSHSPNKSALSKERAEFGILDAAPSQPFSLSELQSHADKEKSSDNEINWAEASFLDAPAKPLSRRSSHKFNELLAKISKPAHNSGDDFDEFDQMVFQSTKEAASSAGETSDMPQGLDLLLKGEIKTTAIPETRAPGNQTPIEPQQVDVDGNVYSVRVCHTPKPDFATLPESEILQQLYKYGIKPLKRKQAVKMLEFIYNQTHPIMKTAAVQDLPARSEPIVRSKSTPVIMERPHSQVAKSTSKTLKAIGTKKDLTFNDATGEELLRFSQSLAPSLCDDFETFVMQTNVTKKTPQPLVPLHIAWHNLICANPQLHESVLTYEPIDLQAVYLHLKHMGHRYDPKDLKTFFDRRCIIFRYELGAPGKQAERHVRRHTKKPSKRK</sequence>
<feature type="chain" id="PRO_0000383568" description="Structure-specific endonuclease subunit SLX4">
    <location>
        <begin position="1"/>
        <end position="1145"/>
    </location>
</feature>
<feature type="region of interest" description="Disordered" evidence="3">
    <location>
        <begin position="48"/>
        <end position="108"/>
    </location>
</feature>
<feature type="region of interest" description="Disordered" evidence="3">
    <location>
        <begin position="382"/>
        <end position="442"/>
    </location>
</feature>
<feature type="region of interest" description="Disordered" evidence="3">
    <location>
        <begin position="613"/>
        <end position="634"/>
    </location>
</feature>
<feature type="region of interest" description="Disordered" evidence="3">
    <location>
        <begin position="666"/>
        <end position="689"/>
    </location>
</feature>
<feature type="coiled-coil region" evidence="2">
    <location>
        <begin position="321"/>
        <end position="372"/>
    </location>
</feature>
<feature type="compositionally biased region" description="Low complexity" evidence="3">
    <location>
        <begin position="382"/>
        <end position="393"/>
    </location>
</feature>
<feature type="compositionally biased region" description="Basic and acidic residues" evidence="3">
    <location>
        <begin position="395"/>
        <end position="410"/>
    </location>
</feature>
<feature type="compositionally biased region" description="Polar residues" evidence="3">
    <location>
        <begin position="411"/>
        <end position="430"/>
    </location>
</feature>
<feature type="compositionally biased region" description="Polar residues" evidence="3">
    <location>
        <begin position="613"/>
        <end position="633"/>
    </location>
</feature>
<feature type="compositionally biased region" description="Polar residues" evidence="3">
    <location>
        <begin position="678"/>
        <end position="689"/>
    </location>
</feature>
<dbReference type="EMBL" id="AE014296">
    <property type="protein sequence ID" value="AAF50581.2"/>
    <property type="molecule type" value="Genomic_DNA"/>
</dbReference>
<dbReference type="RefSeq" id="NP_648104.2">
    <property type="nucleotide sequence ID" value="NM_139847.4"/>
</dbReference>
<dbReference type="BioGRID" id="64249">
    <property type="interactions" value="7"/>
</dbReference>
<dbReference type="FunCoup" id="Q9VS48">
    <property type="interactions" value="6"/>
</dbReference>
<dbReference type="STRING" id="7227.FBpp0310825"/>
<dbReference type="PaxDb" id="7227-FBpp0076550"/>
<dbReference type="EnsemblMetazoa" id="FBtr0076839">
    <property type="protein sequence ID" value="FBpp0076550"/>
    <property type="gene ID" value="FBgn0002909"/>
</dbReference>
<dbReference type="GeneID" id="38809"/>
<dbReference type="KEGG" id="dme:Dmel_CG8601"/>
<dbReference type="UCSC" id="CG8601-RA">
    <property type="organism name" value="d. melanogaster"/>
</dbReference>
<dbReference type="AGR" id="FB:FBgn0002909"/>
<dbReference type="CTD" id="38809"/>
<dbReference type="FlyBase" id="FBgn0002909">
    <property type="gene designation" value="mus312"/>
</dbReference>
<dbReference type="VEuPathDB" id="VectorBase:FBgn0002909"/>
<dbReference type="eggNOG" id="ENOG502S74K">
    <property type="taxonomic scope" value="Eukaryota"/>
</dbReference>
<dbReference type="HOGENOM" id="CLU_309563_0_0_1"/>
<dbReference type="InParanoid" id="Q9VS48"/>
<dbReference type="OrthoDB" id="5576441at2759"/>
<dbReference type="PhylomeDB" id="Q9VS48"/>
<dbReference type="BioGRID-ORCS" id="38809">
    <property type="hits" value="0 hits in 1 CRISPR screen"/>
</dbReference>
<dbReference type="GenomeRNAi" id="38809"/>
<dbReference type="PRO" id="PR:Q9VS48"/>
<dbReference type="Proteomes" id="UP000000803">
    <property type="component" value="Chromosome 3L"/>
</dbReference>
<dbReference type="Bgee" id="FBgn0002909">
    <property type="expression patterns" value="Expressed in ovary and 7 other cell types or tissues"/>
</dbReference>
<dbReference type="GO" id="GO:0032991">
    <property type="term" value="C:protein-containing complex"/>
    <property type="evidence" value="ECO:0000314"/>
    <property type="project" value="FlyBase"/>
</dbReference>
<dbReference type="GO" id="GO:0033557">
    <property type="term" value="C:Slx1-Slx4 complex"/>
    <property type="evidence" value="ECO:0000314"/>
    <property type="project" value="UniProtKB"/>
</dbReference>
<dbReference type="GO" id="GO:0006281">
    <property type="term" value="P:DNA repair"/>
    <property type="evidence" value="ECO:0000316"/>
    <property type="project" value="FlyBase"/>
</dbReference>
<dbReference type="GO" id="GO:0006260">
    <property type="term" value="P:DNA replication"/>
    <property type="evidence" value="ECO:0007669"/>
    <property type="project" value="InterPro"/>
</dbReference>
<dbReference type="GO" id="GO:0035825">
    <property type="term" value="P:homologous recombination"/>
    <property type="evidence" value="ECO:0000316"/>
    <property type="project" value="FlyBase"/>
</dbReference>
<dbReference type="GO" id="GO:0045132">
    <property type="term" value="P:meiotic chromosome segregation"/>
    <property type="evidence" value="ECO:0000315"/>
    <property type="project" value="FlyBase"/>
</dbReference>
<dbReference type="GO" id="GO:0030716">
    <property type="term" value="P:oocyte fate determination"/>
    <property type="evidence" value="ECO:0000315"/>
    <property type="project" value="FlyBase"/>
</dbReference>
<dbReference type="GO" id="GO:0007131">
    <property type="term" value="P:reciprocal meiotic recombination"/>
    <property type="evidence" value="ECO:0000315"/>
    <property type="project" value="FlyBase"/>
</dbReference>
<dbReference type="GO" id="GO:0000712">
    <property type="term" value="P:resolution of meiotic recombination intermediates"/>
    <property type="evidence" value="ECO:0000315"/>
    <property type="project" value="FlyBase"/>
</dbReference>
<dbReference type="CDD" id="cd22999">
    <property type="entry name" value="SAP_SLX4"/>
    <property type="match status" value="1"/>
</dbReference>
<dbReference type="InterPro" id="IPR018574">
    <property type="entry name" value="Structure-sp_endonuc_su_Slx4"/>
</dbReference>
<dbReference type="PANTHER" id="PTHR21541">
    <property type="entry name" value="BTB POZ DOMAIN CONTAINING 12"/>
    <property type="match status" value="1"/>
</dbReference>
<dbReference type="PANTHER" id="PTHR21541:SF3">
    <property type="entry name" value="STRUCTURE-SPECIFIC ENDONUCLEASE SUBUNIT SLX4"/>
    <property type="match status" value="1"/>
</dbReference>
<dbReference type="Pfam" id="PF09494">
    <property type="entry name" value="Slx4"/>
    <property type="match status" value="1"/>
</dbReference>
<name>SLX4_DROME</name>
<evidence type="ECO:0000250" key="1"/>
<evidence type="ECO:0000255" key="2"/>
<evidence type="ECO:0000256" key="3">
    <source>
        <dbReference type="SAM" id="MobiDB-lite"/>
    </source>
</evidence>
<evidence type="ECO:0000269" key="4">
    <source>
    </source>
</evidence>
<evidence type="ECO:0000269" key="5">
    <source>
    </source>
</evidence>
<evidence type="ECO:0000269" key="6">
    <source>
    </source>
</evidence>
<evidence type="ECO:0000305" key="7"/>
<keyword id="KW-0175">Coiled coil</keyword>
<keyword id="KW-0227">DNA damage</keyword>
<keyword id="KW-0233">DNA recombination</keyword>
<keyword id="KW-0234">DNA repair</keyword>
<keyword id="KW-0539">Nucleus</keyword>
<keyword id="KW-1185">Reference proteome</keyword>
<organism>
    <name type="scientific">Drosophila melanogaster</name>
    <name type="common">Fruit fly</name>
    <dbReference type="NCBI Taxonomy" id="7227"/>
    <lineage>
        <taxon>Eukaryota</taxon>
        <taxon>Metazoa</taxon>
        <taxon>Ecdysozoa</taxon>
        <taxon>Arthropoda</taxon>
        <taxon>Hexapoda</taxon>
        <taxon>Insecta</taxon>
        <taxon>Pterygota</taxon>
        <taxon>Neoptera</taxon>
        <taxon>Endopterygota</taxon>
        <taxon>Diptera</taxon>
        <taxon>Brachycera</taxon>
        <taxon>Muscomorpha</taxon>
        <taxon>Ephydroidea</taxon>
        <taxon>Drosophilidae</taxon>
        <taxon>Drosophila</taxon>
        <taxon>Sophophora</taxon>
    </lineage>
</organism>
<reference key="1">
    <citation type="journal article" date="2000" name="Science">
        <title>The genome sequence of Drosophila melanogaster.</title>
        <authorList>
            <person name="Adams M.D."/>
            <person name="Celniker S.E."/>
            <person name="Holt R.A."/>
            <person name="Evans C.A."/>
            <person name="Gocayne J.D."/>
            <person name="Amanatides P.G."/>
            <person name="Scherer S.E."/>
            <person name="Li P.W."/>
            <person name="Hoskins R.A."/>
            <person name="Galle R.F."/>
            <person name="George R.A."/>
            <person name="Lewis S.E."/>
            <person name="Richards S."/>
            <person name="Ashburner M."/>
            <person name="Henderson S.N."/>
            <person name="Sutton G.G."/>
            <person name="Wortman J.R."/>
            <person name="Yandell M.D."/>
            <person name="Zhang Q."/>
            <person name="Chen L.X."/>
            <person name="Brandon R.C."/>
            <person name="Rogers Y.-H.C."/>
            <person name="Blazej R.G."/>
            <person name="Champe M."/>
            <person name="Pfeiffer B.D."/>
            <person name="Wan K.H."/>
            <person name="Doyle C."/>
            <person name="Baxter E.G."/>
            <person name="Helt G."/>
            <person name="Nelson C.R."/>
            <person name="Miklos G.L.G."/>
            <person name="Abril J.F."/>
            <person name="Agbayani A."/>
            <person name="An H.-J."/>
            <person name="Andrews-Pfannkoch C."/>
            <person name="Baldwin D."/>
            <person name="Ballew R.M."/>
            <person name="Basu A."/>
            <person name="Baxendale J."/>
            <person name="Bayraktaroglu L."/>
            <person name="Beasley E.M."/>
            <person name="Beeson K.Y."/>
            <person name="Benos P.V."/>
            <person name="Berman B.P."/>
            <person name="Bhandari D."/>
            <person name="Bolshakov S."/>
            <person name="Borkova D."/>
            <person name="Botchan M.R."/>
            <person name="Bouck J."/>
            <person name="Brokstein P."/>
            <person name="Brottier P."/>
            <person name="Burtis K.C."/>
            <person name="Busam D.A."/>
            <person name="Butler H."/>
            <person name="Cadieu E."/>
            <person name="Center A."/>
            <person name="Chandra I."/>
            <person name="Cherry J.M."/>
            <person name="Cawley S."/>
            <person name="Dahlke C."/>
            <person name="Davenport L.B."/>
            <person name="Davies P."/>
            <person name="de Pablos B."/>
            <person name="Delcher A."/>
            <person name="Deng Z."/>
            <person name="Mays A.D."/>
            <person name="Dew I."/>
            <person name="Dietz S.M."/>
            <person name="Dodson K."/>
            <person name="Doup L.E."/>
            <person name="Downes M."/>
            <person name="Dugan-Rocha S."/>
            <person name="Dunkov B.C."/>
            <person name="Dunn P."/>
            <person name="Durbin K.J."/>
            <person name="Evangelista C.C."/>
            <person name="Ferraz C."/>
            <person name="Ferriera S."/>
            <person name="Fleischmann W."/>
            <person name="Fosler C."/>
            <person name="Gabrielian A.E."/>
            <person name="Garg N.S."/>
            <person name="Gelbart W.M."/>
            <person name="Glasser K."/>
            <person name="Glodek A."/>
            <person name="Gong F."/>
            <person name="Gorrell J.H."/>
            <person name="Gu Z."/>
            <person name="Guan P."/>
            <person name="Harris M."/>
            <person name="Harris N.L."/>
            <person name="Harvey D.A."/>
            <person name="Heiman T.J."/>
            <person name="Hernandez J.R."/>
            <person name="Houck J."/>
            <person name="Hostin D."/>
            <person name="Houston K.A."/>
            <person name="Howland T.J."/>
            <person name="Wei M.-H."/>
            <person name="Ibegwam C."/>
            <person name="Jalali M."/>
            <person name="Kalush F."/>
            <person name="Karpen G.H."/>
            <person name="Ke Z."/>
            <person name="Kennison J.A."/>
            <person name="Ketchum K.A."/>
            <person name="Kimmel B.E."/>
            <person name="Kodira C.D."/>
            <person name="Kraft C.L."/>
            <person name="Kravitz S."/>
            <person name="Kulp D."/>
            <person name="Lai Z."/>
            <person name="Lasko P."/>
            <person name="Lei Y."/>
            <person name="Levitsky A.A."/>
            <person name="Li J.H."/>
            <person name="Li Z."/>
            <person name="Liang Y."/>
            <person name="Lin X."/>
            <person name="Liu X."/>
            <person name="Mattei B."/>
            <person name="McIntosh T.C."/>
            <person name="McLeod M.P."/>
            <person name="McPherson D."/>
            <person name="Merkulov G."/>
            <person name="Milshina N.V."/>
            <person name="Mobarry C."/>
            <person name="Morris J."/>
            <person name="Moshrefi A."/>
            <person name="Mount S.M."/>
            <person name="Moy M."/>
            <person name="Murphy B."/>
            <person name="Murphy L."/>
            <person name="Muzny D.M."/>
            <person name="Nelson D.L."/>
            <person name="Nelson D.R."/>
            <person name="Nelson K.A."/>
            <person name="Nixon K."/>
            <person name="Nusskern D.R."/>
            <person name="Pacleb J.M."/>
            <person name="Palazzolo M."/>
            <person name="Pittman G.S."/>
            <person name="Pan S."/>
            <person name="Pollard J."/>
            <person name="Puri V."/>
            <person name="Reese M.G."/>
            <person name="Reinert K."/>
            <person name="Remington K."/>
            <person name="Saunders R.D.C."/>
            <person name="Scheeler F."/>
            <person name="Shen H."/>
            <person name="Shue B.C."/>
            <person name="Siden-Kiamos I."/>
            <person name="Simpson M."/>
            <person name="Skupski M.P."/>
            <person name="Smith T.J."/>
            <person name="Spier E."/>
            <person name="Spradling A.C."/>
            <person name="Stapleton M."/>
            <person name="Strong R."/>
            <person name="Sun E."/>
            <person name="Svirskas R."/>
            <person name="Tector C."/>
            <person name="Turner R."/>
            <person name="Venter E."/>
            <person name="Wang A.H."/>
            <person name="Wang X."/>
            <person name="Wang Z.-Y."/>
            <person name="Wassarman D.A."/>
            <person name="Weinstock G.M."/>
            <person name="Weissenbach J."/>
            <person name="Williams S.M."/>
            <person name="Woodage T."/>
            <person name="Worley K.C."/>
            <person name="Wu D."/>
            <person name="Yang S."/>
            <person name="Yao Q.A."/>
            <person name="Ye J."/>
            <person name="Yeh R.-F."/>
            <person name="Zaveri J.S."/>
            <person name="Zhan M."/>
            <person name="Zhang G."/>
            <person name="Zhao Q."/>
            <person name="Zheng L."/>
            <person name="Zheng X.H."/>
            <person name="Zhong F.N."/>
            <person name="Zhong W."/>
            <person name="Zhou X."/>
            <person name="Zhu S.C."/>
            <person name="Zhu X."/>
            <person name="Smith H.O."/>
            <person name="Gibbs R.A."/>
            <person name="Myers E.W."/>
            <person name="Rubin G.M."/>
            <person name="Venter J.C."/>
        </authorList>
    </citation>
    <scope>NUCLEOTIDE SEQUENCE [LARGE SCALE GENOMIC DNA]</scope>
    <source>
        <strain>Berkeley</strain>
    </source>
</reference>
<reference key="2">
    <citation type="journal article" date="2002" name="Genome Biol.">
        <title>Annotation of the Drosophila melanogaster euchromatic genome: a systematic review.</title>
        <authorList>
            <person name="Misra S."/>
            <person name="Crosby M.A."/>
            <person name="Mungall C.J."/>
            <person name="Matthews B.B."/>
            <person name="Campbell K.S."/>
            <person name="Hradecky P."/>
            <person name="Huang Y."/>
            <person name="Kaminker J.S."/>
            <person name="Millburn G.H."/>
            <person name="Prochnik S.E."/>
            <person name="Smith C.D."/>
            <person name="Tupy J.L."/>
            <person name="Whitfield E.J."/>
            <person name="Bayraktaroglu L."/>
            <person name="Berman B.P."/>
            <person name="Bettencourt B.R."/>
            <person name="Celniker S.E."/>
            <person name="de Grey A.D.N.J."/>
            <person name="Drysdale R.A."/>
            <person name="Harris N.L."/>
            <person name="Richter J."/>
            <person name="Russo S."/>
            <person name="Schroeder A.J."/>
            <person name="Shu S.Q."/>
            <person name="Stapleton M."/>
            <person name="Yamada C."/>
            <person name="Ashburner M."/>
            <person name="Gelbart W.M."/>
            <person name="Rubin G.M."/>
            <person name="Lewis S.E."/>
        </authorList>
    </citation>
    <scope>GENOME REANNOTATION</scope>
    <source>
        <strain>Berkeley</strain>
    </source>
</reference>
<reference key="3">
    <citation type="journal article" date="2002" name="Mol. Cell">
        <title>Drosophila MUS312 interacts with the nucleotide excision repair endonuclease MEI-9 to generate meiotic crossovers.</title>
        <authorList>
            <person name="Yildiz O."/>
            <person name="Majumder S."/>
            <person name="Kramer B."/>
            <person name="Sekelsky J.J."/>
        </authorList>
    </citation>
    <scope>FUNCTION</scope>
    <scope>INTERACTION WITH MEI-9</scope>
</reference>
<reference key="4">
    <citation type="journal article" date="2009" name="Cell">
        <title>Human SLX4 is a Holliday junction resolvase subunit that binds multiple DNA repair/recombination endonucleases.</title>
        <authorList>
            <person name="Fekairi S."/>
            <person name="Scaglione S."/>
            <person name="Chahwan C."/>
            <person name="Taylor E.R."/>
            <person name="Tissier A."/>
            <person name="Coulon S."/>
            <person name="Dong M.-Q."/>
            <person name="Ruse C."/>
            <person name="Yates J.R. III"/>
            <person name="Russell P."/>
            <person name="Fuchs R.P."/>
            <person name="McGowan C.H."/>
            <person name="Gaillard P.-H.L."/>
        </authorList>
    </citation>
    <scope>FUNCTION</scope>
    <scope>INTERACTION WITH SLX1</scope>
</reference>
<reference key="5">
    <citation type="journal article" date="2009" name="Mol. Cell">
        <title>Drosophila MUS312 and the vertebrate ortholog BTBD12 interact with DNA structure-specific endonucleases in DNA repair and recombination.</title>
        <authorList>
            <person name="Andersen S.L."/>
            <person name="Bergstralh D.T."/>
            <person name="Kohl K.P."/>
            <person name="LaRocque J.R."/>
            <person name="Moore C.B."/>
            <person name="Sekelsky J."/>
        </authorList>
    </citation>
    <scope>FUNCTION</scope>
    <scope>INTERACTION WITH MEI-9 AND SLX1</scope>
</reference>